<accession>A6VJ32</accession>
<protein>
    <recommendedName>
        <fullName evidence="1">Alanine--tRNA ligase</fullName>
        <ecNumber evidence="1">6.1.1.7</ecNumber>
    </recommendedName>
    <alternativeName>
        <fullName evidence="1">Alanyl-tRNA synthetase</fullName>
        <shortName evidence="1">AlaRS</shortName>
    </alternativeName>
</protein>
<proteinExistence type="inferred from homology"/>
<reference key="1">
    <citation type="submission" date="2007-06" db="EMBL/GenBank/DDBJ databases">
        <title>Complete sequence of Methanococcus maripaludis C7.</title>
        <authorList>
            <consortium name="US DOE Joint Genome Institute"/>
            <person name="Copeland A."/>
            <person name="Lucas S."/>
            <person name="Lapidus A."/>
            <person name="Barry K."/>
            <person name="Glavina del Rio T."/>
            <person name="Dalin E."/>
            <person name="Tice H."/>
            <person name="Pitluck S."/>
            <person name="Clum A."/>
            <person name="Schmutz J."/>
            <person name="Larimer F."/>
            <person name="Land M."/>
            <person name="Hauser L."/>
            <person name="Kyrpides N."/>
            <person name="Anderson I."/>
            <person name="Sieprawska-Lupa M."/>
            <person name="Whitman W.B."/>
            <person name="Richardson P."/>
        </authorList>
    </citation>
    <scope>NUCLEOTIDE SEQUENCE [LARGE SCALE GENOMIC DNA]</scope>
    <source>
        <strain>C7 / ATCC BAA-1331</strain>
    </source>
</reference>
<sequence>MEINHDYRVKLFDELGFERKQCTECNQWFWTLDKDRTTCGDSPCDEYSFIGSPITRKKYTYNEMVREFTNFFAEKGHSPVKRSPVVAKRWRDDILLTIASIAVFQPWVTNGLVKPVKNPLVIAQPCIRLNDIDNVGRTGRHLTCFTMGAHHAFNSKDDYKYWTDKTVEYCFELMNRLGIDGKTITFIESWWEGGGNAGPCYEVITHGVELATLVFMQYKKVGSEYEEIPLKIVDTGYGIERFAWASQGTPTVYESLFSEVIEKLKEDAGIPGVDEKIMAESATLAGLMDIENVGDLRVLRQKVAEKIGMDVDELDKLISPLEYIYAIADHTRCLSFMFGDGIVPSNVKEGYLARLVLRKTLRYMEKIGISMSIKDIISMQLENMKEIYPELSEMKEYIMDVLDSEEKKYIQTVNRGRGIVERMAASKSEITLDDLIELYDSNGLPPEIVKDVVDELNKKGKKTIAITVPDNFYTIVAERHEEEKPEEVVSTKKELPEVEVSETELLFFKHPTQVEFEAKVLKTVEKYVVLDKTLFYAEGGGQKYDIGQINGIEVIDVQKKNGIVFHKVSDISKFKEGDIVKGTVNWENRLKLMRNHTATHVINAAATRVLGKHIWQTGSNVDTEKGRLDITHYERISREQVKEIERIANEIVLSKMPVNSTFMDRNDAEQKYGFTIYQGGVVPGDTLRIIEIEGTDVEACGGTHCSNTSEIGYIKVLKTERIQDGVERLEYSTGMGSVSEIAVLEDTLIDSAEILGIPNDQLPKTVKRFFEEWKEQKKTIEELQKKVGELVKYELADKFEKYGNYEVLVEQVSGTPNELMSIADNLAVGNKLIVLMNENDYLLCKRGENVELSMKELIRNIGKGGGKDNLAQGKYSENKEQITEKIIQILNK</sequence>
<evidence type="ECO:0000255" key="1">
    <source>
        <dbReference type="HAMAP-Rule" id="MF_00036"/>
    </source>
</evidence>
<comment type="function">
    <text evidence="1">Catalyzes the attachment of alanine to tRNA(Ala) in a two-step reaction: alanine is first activated by ATP to form Ala-AMP and then transferred to the acceptor end of tRNA(Ala). Also edits incorrectly charged Ser-tRNA(Ala) and Gly-tRNA(Ala) via its editing domain.</text>
</comment>
<comment type="catalytic activity">
    <reaction evidence="1">
        <text>tRNA(Ala) + L-alanine + ATP = L-alanyl-tRNA(Ala) + AMP + diphosphate</text>
        <dbReference type="Rhea" id="RHEA:12540"/>
        <dbReference type="Rhea" id="RHEA-COMP:9657"/>
        <dbReference type="Rhea" id="RHEA-COMP:9923"/>
        <dbReference type="ChEBI" id="CHEBI:30616"/>
        <dbReference type="ChEBI" id="CHEBI:33019"/>
        <dbReference type="ChEBI" id="CHEBI:57972"/>
        <dbReference type="ChEBI" id="CHEBI:78442"/>
        <dbReference type="ChEBI" id="CHEBI:78497"/>
        <dbReference type="ChEBI" id="CHEBI:456215"/>
        <dbReference type="EC" id="6.1.1.7"/>
    </reaction>
</comment>
<comment type="cofactor">
    <cofactor evidence="1">
        <name>Zn(2+)</name>
        <dbReference type="ChEBI" id="CHEBI:29105"/>
    </cofactor>
    <text evidence="1">Binds 1 zinc ion per subunit.</text>
</comment>
<comment type="subcellular location">
    <subcellularLocation>
        <location evidence="1">Cytoplasm</location>
    </subcellularLocation>
</comment>
<comment type="domain">
    <text evidence="1">Consists of three domains; the N-terminal catalytic domain, the editing domain and the C-terminal C-Ala domain. The editing domain removes incorrectly charged amino acids, while the C-Ala domain, along with tRNA(Ala), serves as a bridge to cooperatively bring together the editing and aminoacylation centers thus stimulating deacylation of misacylated tRNAs.</text>
</comment>
<comment type="similarity">
    <text evidence="1">Belongs to the class-II aminoacyl-tRNA synthetase family.</text>
</comment>
<dbReference type="EC" id="6.1.1.7" evidence="1"/>
<dbReference type="EMBL" id="CP000745">
    <property type="protein sequence ID" value="ABR66458.1"/>
    <property type="molecule type" value="Genomic_DNA"/>
</dbReference>
<dbReference type="SMR" id="A6VJ32"/>
<dbReference type="STRING" id="426368.MmarC7_1395"/>
<dbReference type="KEGG" id="mmz:MmarC7_1395"/>
<dbReference type="eggNOG" id="arCOG01255">
    <property type="taxonomic scope" value="Archaea"/>
</dbReference>
<dbReference type="HOGENOM" id="CLU_004485_4_0_2"/>
<dbReference type="OrthoDB" id="7506at2157"/>
<dbReference type="GO" id="GO:0005737">
    <property type="term" value="C:cytoplasm"/>
    <property type="evidence" value="ECO:0007669"/>
    <property type="project" value="UniProtKB-SubCell"/>
</dbReference>
<dbReference type="GO" id="GO:0004813">
    <property type="term" value="F:alanine-tRNA ligase activity"/>
    <property type="evidence" value="ECO:0007669"/>
    <property type="project" value="UniProtKB-UniRule"/>
</dbReference>
<dbReference type="GO" id="GO:0002161">
    <property type="term" value="F:aminoacyl-tRNA deacylase activity"/>
    <property type="evidence" value="ECO:0007669"/>
    <property type="project" value="UniProtKB-ARBA"/>
</dbReference>
<dbReference type="GO" id="GO:0005524">
    <property type="term" value="F:ATP binding"/>
    <property type="evidence" value="ECO:0007669"/>
    <property type="project" value="UniProtKB-UniRule"/>
</dbReference>
<dbReference type="GO" id="GO:0000049">
    <property type="term" value="F:tRNA binding"/>
    <property type="evidence" value="ECO:0007669"/>
    <property type="project" value="UniProtKB-KW"/>
</dbReference>
<dbReference type="GO" id="GO:0008270">
    <property type="term" value="F:zinc ion binding"/>
    <property type="evidence" value="ECO:0007669"/>
    <property type="project" value="UniProtKB-UniRule"/>
</dbReference>
<dbReference type="GO" id="GO:0006419">
    <property type="term" value="P:alanyl-tRNA aminoacylation"/>
    <property type="evidence" value="ECO:0007669"/>
    <property type="project" value="UniProtKB-UniRule"/>
</dbReference>
<dbReference type="CDD" id="cd00673">
    <property type="entry name" value="AlaRS_core"/>
    <property type="match status" value="1"/>
</dbReference>
<dbReference type="FunFam" id="3.30.54.20:FF:000004">
    <property type="entry name" value="Alanine--tRNA ligase"/>
    <property type="match status" value="1"/>
</dbReference>
<dbReference type="FunFam" id="3.30.930.10:FF:000056">
    <property type="entry name" value="Alanine--tRNA ligase"/>
    <property type="match status" value="1"/>
</dbReference>
<dbReference type="FunFam" id="3.30.980.10:FF:000004">
    <property type="entry name" value="Alanine--tRNA ligase, cytoplasmic"/>
    <property type="match status" value="1"/>
</dbReference>
<dbReference type="Gene3D" id="2.40.30.130">
    <property type="match status" value="1"/>
</dbReference>
<dbReference type="Gene3D" id="3.10.310.40">
    <property type="match status" value="1"/>
</dbReference>
<dbReference type="Gene3D" id="3.30.54.20">
    <property type="match status" value="1"/>
</dbReference>
<dbReference type="Gene3D" id="6.10.250.550">
    <property type="match status" value="1"/>
</dbReference>
<dbReference type="Gene3D" id="3.30.930.10">
    <property type="entry name" value="Bira Bifunctional Protein, Domain 2"/>
    <property type="match status" value="1"/>
</dbReference>
<dbReference type="Gene3D" id="3.30.980.10">
    <property type="entry name" value="Threonyl-trna Synthetase, Chain A, domain 2"/>
    <property type="match status" value="1"/>
</dbReference>
<dbReference type="HAMAP" id="MF_00036_A">
    <property type="entry name" value="Ala_tRNA_synth_A"/>
    <property type="match status" value="1"/>
</dbReference>
<dbReference type="InterPro" id="IPR045864">
    <property type="entry name" value="aa-tRNA-synth_II/BPL/LPL"/>
</dbReference>
<dbReference type="InterPro" id="IPR002318">
    <property type="entry name" value="Ala-tRNA-lgiase_IIc"/>
</dbReference>
<dbReference type="InterPro" id="IPR018162">
    <property type="entry name" value="Ala-tRNA-ligase_IIc_anticod-bd"/>
</dbReference>
<dbReference type="InterPro" id="IPR018165">
    <property type="entry name" value="Ala-tRNA-synth_IIc_core"/>
</dbReference>
<dbReference type="InterPro" id="IPR018164">
    <property type="entry name" value="Ala-tRNA-synth_IIc_N"/>
</dbReference>
<dbReference type="InterPro" id="IPR022429">
    <property type="entry name" value="Ala-tRNA_lgiase_arc"/>
</dbReference>
<dbReference type="InterPro" id="IPR050058">
    <property type="entry name" value="Ala-tRNA_ligase"/>
</dbReference>
<dbReference type="InterPro" id="IPR003156">
    <property type="entry name" value="DHHA1_dom"/>
</dbReference>
<dbReference type="InterPro" id="IPR018163">
    <property type="entry name" value="Thr/Ala-tRNA-synth_IIc_edit"/>
</dbReference>
<dbReference type="InterPro" id="IPR009000">
    <property type="entry name" value="Transl_B-barrel_sf"/>
</dbReference>
<dbReference type="InterPro" id="IPR012947">
    <property type="entry name" value="tRNA_SAD"/>
</dbReference>
<dbReference type="NCBIfam" id="TIGR03683">
    <property type="entry name" value="A-tRNA_syn_arch"/>
    <property type="match status" value="1"/>
</dbReference>
<dbReference type="NCBIfam" id="TIGR00344">
    <property type="entry name" value="alaS"/>
    <property type="match status" value="1"/>
</dbReference>
<dbReference type="PANTHER" id="PTHR11777:SF9">
    <property type="entry name" value="ALANINE--TRNA LIGASE, CYTOPLASMIC"/>
    <property type="match status" value="1"/>
</dbReference>
<dbReference type="PANTHER" id="PTHR11777">
    <property type="entry name" value="ALANYL-TRNA SYNTHETASE"/>
    <property type="match status" value="1"/>
</dbReference>
<dbReference type="Pfam" id="PF02272">
    <property type="entry name" value="DHHA1"/>
    <property type="match status" value="1"/>
</dbReference>
<dbReference type="Pfam" id="PF01411">
    <property type="entry name" value="tRNA-synt_2c"/>
    <property type="match status" value="1"/>
</dbReference>
<dbReference type="Pfam" id="PF07973">
    <property type="entry name" value="tRNA_SAD"/>
    <property type="match status" value="1"/>
</dbReference>
<dbReference type="PRINTS" id="PR00980">
    <property type="entry name" value="TRNASYNTHALA"/>
</dbReference>
<dbReference type="SMART" id="SM00863">
    <property type="entry name" value="tRNA_SAD"/>
    <property type="match status" value="1"/>
</dbReference>
<dbReference type="SUPFAM" id="SSF55681">
    <property type="entry name" value="Class II aaRS and biotin synthetases"/>
    <property type="match status" value="1"/>
</dbReference>
<dbReference type="SUPFAM" id="SSF101353">
    <property type="entry name" value="Putative anticodon-binding domain of alanyl-tRNA synthetase (AlaRS)"/>
    <property type="match status" value="1"/>
</dbReference>
<dbReference type="SUPFAM" id="SSF55186">
    <property type="entry name" value="ThrRS/AlaRS common domain"/>
    <property type="match status" value="1"/>
</dbReference>
<dbReference type="SUPFAM" id="SSF50447">
    <property type="entry name" value="Translation proteins"/>
    <property type="match status" value="1"/>
</dbReference>
<dbReference type="PROSITE" id="PS50860">
    <property type="entry name" value="AA_TRNA_LIGASE_II_ALA"/>
    <property type="match status" value="1"/>
</dbReference>
<feature type="chain" id="PRO_1000074511" description="Alanine--tRNA ligase">
    <location>
        <begin position="1"/>
        <end position="892"/>
    </location>
</feature>
<feature type="binding site" evidence="1">
    <location>
        <position position="596"/>
    </location>
    <ligand>
        <name>Zn(2+)</name>
        <dbReference type="ChEBI" id="CHEBI:29105"/>
    </ligand>
</feature>
<feature type="binding site" evidence="1">
    <location>
        <position position="600"/>
    </location>
    <ligand>
        <name>Zn(2+)</name>
        <dbReference type="ChEBI" id="CHEBI:29105"/>
    </ligand>
</feature>
<feature type="binding site" evidence="1">
    <location>
        <position position="700"/>
    </location>
    <ligand>
        <name>Zn(2+)</name>
        <dbReference type="ChEBI" id="CHEBI:29105"/>
    </ligand>
</feature>
<feature type="binding site" evidence="1">
    <location>
        <position position="704"/>
    </location>
    <ligand>
        <name>Zn(2+)</name>
        <dbReference type="ChEBI" id="CHEBI:29105"/>
    </ligand>
</feature>
<gene>
    <name evidence="1" type="primary">alaS</name>
    <name type="ordered locus">MmarC7_1395</name>
</gene>
<keyword id="KW-0030">Aminoacyl-tRNA synthetase</keyword>
<keyword id="KW-0067">ATP-binding</keyword>
<keyword id="KW-0963">Cytoplasm</keyword>
<keyword id="KW-0436">Ligase</keyword>
<keyword id="KW-0479">Metal-binding</keyword>
<keyword id="KW-0547">Nucleotide-binding</keyword>
<keyword id="KW-0648">Protein biosynthesis</keyword>
<keyword id="KW-0694">RNA-binding</keyword>
<keyword id="KW-0820">tRNA-binding</keyword>
<keyword id="KW-0862">Zinc</keyword>
<name>SYA_METM7</name>
<organism>
    <name type="scientific">Methanococcus maripaludis (strain C7 / ATCC BAA-1331)</name>
    <dbReference type="NCBI Taxonomy" id="426368"/>
    <lineage>
        <taxon>Archaea</taxon>
        <taxon>Methanobacteriati</taxon>
        <taxon>Methanobacteriota</taxon>
        <taxon>Methanomada group</taxon>
        <taxon>Methanococci</taxon>
        <taxon>Methanococcales</taxon>
        <taxon>Methanococcaceae</taxon>
        <taxon>Methanococcus</taxon>
    </lineage>
</organism>